<dbReference type="EC" id="2.7.7.38" evidence="1"/>
<dbReference type="EMBL" id="CP000749">
    <property type="protein sequence ID" value="ABR70057.1"/>
    <property type="molecule type" value="Genomic_DNA"/>
</dbReference>
<dbReference type="SMR" id="A6VUC8"/>
<dbReference type="STRING" id="400668.Mmwyl1_1126"/>
<dbReference type="KEGG" id="mmw:Mmwyl1_1126"/>
<dbReference type="eggNOG" id="COG1212">
    <property type="taxonomic scope" value="Bacteria"/>
</dbReference>
<dbReference type="HOGENOM" id="CLU_065038_1_0_6"/>
<dbReference type="OrthoDB" id="9815559at2"/>
<dbReference type="UniPathway" id="UPA00030"/>
<dbReference type="UniPathway" id="UPA00358">
    <property type="reaction ID" value="UER00476"/>
</dbReference>
<dbReference type="GO" id="GO:0005829">
    <property type="term" value="C:cytosol"/>
    <property type="evidence" value="ECO:0007669"/>
    <property type="project" value="TreeGrafter"/>
</dbReference>
<dbReference type="GO" id="GO:0008690">
    <property type="term" value="F:3-deoxy-manno-octulosonate cytidylyltransferase activity"/>
    <property type="evidence" value="ECO:0007669"/>
    <property type="project" value="UniProtKB-UniRule"/>
</dbReference>
<dbReference type="GO" id="GO:0033468">
    <property type="term" value="P:CMP-keto-3-deoxy-D-manno-octulosonic acid biosynthetic process"/>
    <property type="evidence" value="ECO:0007669"/>
    <property type="project" value="UniProtKB-UniRule"/>
</dbReference>
<dbReference type="GO" id="GO:0009103">
    <property type="term" value="P:lipopolysaccharide biosynthetic process"/>
    <property type="evidence" value="ECO:0007669"/>
    <property type="project" value="UniProtKB-UniRule"/>
</dbReference>
<dbReference type="CDD" id="cd02517">
    <property type="entry name" value="CMP-KDO-Synthetase"/>
    <property type="match status" value="1"/>
</dbReference>
<dbReference type="FunFam" id="3.90.550.10:FF:000011">
    <property type="entry name" value="3-deoxy-manno-octulosonate cytidylyltransferase"/>
    <property type="match status" value="1"/>
</dbReference>
<dbReference type="Gene3D" id="3.90.550.10">
    <property type="entry name" value="Spore Coat Polysaccharide Biosynthesis Protein SpsA, Chain A"/>
    <property type="match status" value="1"/>
</dbReference>
<dbReference type="HAMAP" id="MF_00057">
    <property type="entry name" value="KdsB"/>
    <property type="match status" value="1"/>
</dbReference>
<dbReference type="InterPro" id="IPR003329">
    <property type="entry name" value="Cytidylyl_trans"/>
</dbReference>
<dbReference type="InterPro" id="IPR004528">
    <property type="entry name" value="KdsB"/>
</dbReference>
<dbReference type="InterPro" id="IPR029044">
    <property type="entry name" value="Nucleotide-diphossugar_trans"/>
</dbReference>
<dbReference type="NCBIfam" id="TIGR00466">
    <property type="entry name" value="kdsB"/>
    <property type="match status" value="1"/>
</dbReference>
<dbReference type="NCBIfam" id="NF003950">
    <property type="entry name" value="PRK05450.1-3"/>
    <property type="match status" value="1"/>
</dbReference>
<dbReference type="NCBIfam" id="NF003952">
    <property type="entry name" value="PRK05450.1-5"/>
    <property type="match status" value="1"/>
</dbReference>
<dbReference type="NCBIfam" id="NF009905">
    <property type="entry name" value="PRK13368.1"/>
    <property type="match status" value="1"/>
</dbReference>
<dbReference type="PANTHER" id="PTHR42866">
    <property type="entry name" value="3-DEOXY-MANNO-OCTULOSONATE CYTIDYLYLTRANSFERASE"/>
    <property type="match status" value="1"/>
</dbReference>
<dbReference type="PANTHER" id="PTHR42866:SF2">
    <property type="entry name" value="3-DEOXY-MANNO-OCTULOSONATE CYTIDYLYLTRANSFERASE, MITOCHONDRIAL"/>
    <property type="match status" value="1"/>
</dbReference>
<dbReference type="Pfam" id="PF02348">
    <property type="entry name" value="CTP_transf_3"/>
    <property type="match status" value="1"/>
</dbReference>
<dbReference type="SUPFAM" id="SSF53448">
    <property type="entry name" value="Nucleotide-diphospho-sugar transferases"/>
    <property type="match status" value="1"/>
</dbReference>
<sequence>MTTQSLPDFHIVIPARYASQRFPQKLMADLGGKPVLQWVYELALKAGAQSVTIATDHQLIEKAAIGFGASVVMTRDDHENGTERLAEVAAKMDWQGDEIVVNVQGDEPFLPVNLIHSSVIALNQDKEAEMATVACAIDQVEDFFNPNVVKVVCDEKQRALYFSRSPMPWDRDGFASNPDRTGLLPVGFPALRHIGLYVYRASLLAKYADLPMSPLERWEKLEQLRFLHQGIKVQVALADGLPTHGVDTPEDLEKLRYQLSLDSI</sequence>
<comment type="function">
    <text evidence="1">Activates KDO (a required 8-carbon sugar) for incorporation into bacterial lipopolysaccharide in Gram-negative bacteria.</text>
</comment>
<comment type="catalytic activity">
    <reaction evidence="1">
        <text>3-deoxy-alpha-D-manno-oct-2-ulosonate + CTP = CMP-3-deoxy-beta-D-manno-octulosonate + diphosphate</text>
        <dbReference type="Rhea" id="RHEA:23448"/>
        <dbReference type="ChEBI" id="CHEBI:33019"/>
        <dbReference type="ChEBI" id="CHEBI:37563"/>
        <dbReference type="ChEBI" id="CHEBI:85986"/>
        <dbReference type="ChEBI" id="CHEBI:85987"/>
        <dbReference type="EC" id="2.7.7.38"/>
    </reaction>
</comment>
<comment type="pathway">
    <text evidence="1">Nucleotide-sugar biosynthesis; CMP-3-deoxy-D-manno-octulosonate biosynthesis; CMP-3-deoxy-D-manno-octulosonate from 3-deoxy-D-manno-octulosonate and CTP: step 1/1.</text>
</comment>
<comment type="pathway">
    <text evidence="1">Bacterial outer membrane biogenesis; lipopolysaccharide biosynthesis.</text>
</comment>
<comment type="subcellular location">
    <subcellularLocation>
        <location evidence="1">Cytoplasm</location>
    </subcellularLocation>
</comment>
<comment type="similarity">
    <text evidence="1">Belongs to the KdsB family.</text>
</comment>
<name>KDSB_MARMS</name>
<keyword id="KW-0963">Cytoplasm</keyword>
<keyword id="KW-0448">Lipopolysaccharide biosynthesis</keyword>
<keyword id="KW-0548">Nucleotidyltransferase</keyword>
<keyword id="KW-0808">Transferase</keyword>
<protein>
    <recommendedName>
        <fullName evidence="1">3-deoxy-manno-octulosonate cytidylyltransferase</fullName>
        <ecNumber evidence="1">2.7.7.38</ecNumber>
    </recommendedName>
    <alternativeName>
        <fullName evidence="1">CMP-2-keto-3-deoxyoctulosonic acid synthase</fullName>
        <shortName evidence="1">CKS</shortName>
        <shortName evidence="1">CMP-KDO synthase</shortName>
    </alternativeName>
</protein>
<accession>A6VUC8</accession>
<proteinExistence type="inferred from homology"/>
<organism>
    <name type="scientific">Marinomonas sp. (strain MWYL1)</name>
    <dbReference type="NCBI Taxonomy" id="400668"/>
    <lineage>
        <taxon>Bacteria</taxon>
        <taxon>Pseudomonadati</taxon>
        <taxon>Pseudomonadota</taxon>
        <taxon>Gammaproteobacteria</taxon>
        <taxon>Oceanospirillales</taxon>
        <taxon>Oceanospirillaceae</taxon>
        <taxon>Marinomonas</taxon>
    </lineage>
</organism>
<gene>
    <name evidence="1" type="primary">kdsB</name>
    <name type="ordered locus">Mmwyl1_1126</name>
</gene>
<evidence type="ECO:0000255" key="1">
    <source>
        <dbReference type="HAMAP-Rule" id="MF_00057"/>
    </source>
</evidence>
<reference key="1">
    <citation type="submission" date="2007-06" db="EMBL/GenBank/DDBJ databases">
        <title>Complete sequence of Marinomonas sp. MWYL1.</title>
        <authorList>
            <consortium name="US DOE Joint Genome Institute"/>
            <person name="Copeland A."/>
            <person name="Lucas S."/>
            <person name="Lapidus A."/>
            <person name="Barry K."/>
            <person name="Glavina del Rio T."/>
            <person name="Dalin E."/>
            <person name="Tice H."/>
            <person name="Pitluck S."/>
            <person name="Kiss H."/>
            <person name="Brettin T."/>
            <person name="Bruce D."/>
            <person name="Detter J.C."/>
            <person name="Han C."/>
            <person name="Schmutz J."/>
            <person name="Larimer F."/>
            <person name="Land M."/>
            <person name="Hauser L."/>
            <person name="Kyrpides N."/>
            <person name="Kim E."/>
            <person name="Johnston A.W.B."/>
            <person name="Todd J.D."/>
            <person name="Rogers R."/>
            <person name="Wexler M."/>
            <person name="Bond P.L."/>
            <person name="Li Y."/>
            <person name="Richardson P."/>
        </authorList>
    </citation>
    <scope>NUCLEOTIDE SEQUENCE [LARGE SCALE GENOMIC DNA]</scope>
    <source>
        <strain>MWYL1</strain>
    </source>
</reference>
<feature type="chain" id="PRO_0000370094" description="3-deoxy-manno-octulosonate cytidylyltransferase">
    <location>
        <begin position="1"/>
        <end position="264"/>
    </location>
</feature>